<gene>
    <name evidence="1" type="primary">leuC</name>
    <name type="ordered locus">BMEI0157</name>
</gene>
<dbReference type="EC" id="4.2.1.33" evidence="1"/>
<dbReference type="EMBL" id="AE008917">
    <property type="protein sequence ID" value="AAL51339.1"/>
    <property type="molecule type" value="Genomic_DNA"/>
</dbReference>
<dbReference type="PIR" id="AH3271">
    <property type="entry name" value="AH3271"/>
</dbReference>
<dbReference type="RefSeq" id="WP_004684442.1">
    <property type="nucleotide sequence ID" value="NZ_GG703778.1"/>
</dbReference>
<dbReference type="SMR" id="Q8YJC9"/>
<dbReference type="GeneID" id="29594568"/>
<dbReference type="KEGG" id="bme:BMEI0157"/>
<dbReference type="KEGG" id="bmel:DK63_1278"/>
<dbReference type="PATRIC" id="fig|224914.52.peg.1347"/>
<dbReference type="eggNOG" id="COG0065">
    <property type="taxonomic scope" value="Bacteria"/>
</dbReference>
<dbReference type="UniPathway" id="UPA00048">
    <property type="reaction ID" value="UER00071"/>
</dbReference>
<dbReference type="Proteomes" id="UP000000419">
    <property type="component" value="Chromosome I"/>
</dbReference>
<dbReference type="GO" id="GO:0003861">
    <property type="term" value="F:3-isopropylmalate dehydratase activity"/>
    <property type="evidence" value="ECO:0007669"/>
    <property type="project" value="UniProtKB-UniRule"/>
</dbReference>
<dbReference type="GO" id="GO:0051539">
    <property type="term" value="F:4 iron, 4 sulfur cluster binding"/>
    <property type="evidence" value="ECO:0007669"/>
    <property type="project" value="UniProtKB-KW"/>
</dbReference>
<dbReference type="GO" id="GO:0046872">
    <property type="term" value="F:metal ion binding"/>
    <property type="evidence" value="ECO:0007669"/>
    <property type="project" value="UniProtKB-KW"/>
</dbReference>
<dbReference type="GO" id="GO:0009098">
    <property type="term" value="P:L-leucine biosynthetic process"/>
    <property type="evidence" value="ECO:0007669"/>
    <property type="project" value="UniProtKB-UniRule"/>
</dbReference>
<dbReference type="CDD" id="cd01583">
    <property type="entry name" value="IPMI"/>
    <property type="match status" value="1"/>
</dbReference>
<dbReference type="FunFam" id="3.30.499.10:FF:000006">
    <property type="entry name" value="3-isopropylmalate dehydratase large subunit"/>
    <property type="match status" value="1"/>
</dbReference>
<dbReference type="FunFam" id="3.30.499.10:FF:000007">
    <property type="entry name" value="3-isopropylmalate dehydratase large subunit"/>
    <property type="match status" value="1"/>
</dbReference>
<dbReference type="Gene3D" id="3.30.499.10">
    <property type="entry name" value="Aconitase, domain 3"/>
    <property type="match status" value="2"/>
</dbReference>
<dbReference type="HAMAP" id="MF_01026">
    <property type="entry name" value="LeuC_type1"/>
    <property type="match status" value="1"/>
</dbReference>
<dbReference type="InterPro" id="IPR004430">
    <property type="entry name" value="3-IsopropMal_deHydase_lsu"/>
</dbReference>
<dbReference type="InterPro" id="IPR015931">
    <property type="entry name" value="Acnase/IPM_dHydase_lsu_aba_1/3"/>
</dbReference>
<dbReference type="InterPro" id="IPR001030">
    <property type="entry name" value="Acoase/IPM_deHydtase_lsu_aba"/>
</dbReference>
<dbReference type="InterPro" id="IPR018136">
    <property type="entry name" value="Aconitase_4Fe-4S_BS"/>
</dbReference>
<dbReference type="InterPro" id="IPR036008">
    <property type="entry name" value="Aconitase_4Fe-4S_dom"/>
</dbReference>
<dbReference type="InterPro" id="IPR050067">
    <property type="entry name" value="IPM_dehydratase_rel_enz"/>
</dbReference>
<dbReference type="InterPro" id="IPR033941">
    <property type="entry name" value="IPMI_cat"/>
</dbReference>
<dbReference type="NCBIfam" id="TIGR00170">
    <property type="entry name" value="leuC"/>
    <property type="match status" value="1"/>
</dbReference>
<dbReference type="NCBIfam" id="NF004016">
    <property type="entry name" value="PRK05478.1"/>
    <property type="match status" value="1"/>
</dbReference>
<dbReference type="NCBIfam" id="NF009116">
    <property type="entry name" value="PRK12466.1"/>
    <property type="match status" value="1"/>
</dbReference>
<dbReference type="PANTHER" id="PTHR43822:SF9">
    <property type="entry name" value="3-ISOPROPYLMALATE DEHYDRATASE"/>
    <property type="match status" value="1"/>
</dbReference>
<dbReference type="PANTHER" id="PTHR43822">
    <property type="entry name" value="HOMOACONITASE, MITOCHONDRIAL-RELATED"/>
    <property type="match status" value="1"/>
</dbReference>
<dbReference type="Pfam" id="PF00330">
    <property type="entry name" value="Aconitase"/>
    <property type="match status" value="1"/>
</dbReference>
<dbReference type="PRINTS" id="PR00415">
    <property type="entry name" value="ACONITASE"/>
</dbReference>
<dbReference type="SUPFAM" id="SSF53732">
    <property type="entry name" value="Aconitase iron-sulfur domain"/>
    <property type="match status" value="1"/>
</dbReference>
<dbReference type="PROSITE" id="PS00450">
    <property type="entry name" value="ACONITASE_1"/>
    <property type="match status" value="1"/>
</dbReference>
<dbReference type="PROSITE" id="PS01244">
    <property type="entry name" value="ACONITASE_2"/>
    <property type="match status" value="1"/>
</dbReference>
<comment type="function">
    <text evidence="1">Catalyzes the isomerization between 2-isopropylmalate and 3-isopropylmalate, via the formation of 2-isopropylmaleate.</text>
</comment>
<comment type="catalytic activity">
    <reaction evidence="1">
        <text>(2R,3S)-3-isopropylmalate = (2S)-2-isopropylmalate</text>
        <dbReference type="Rhea" id="RHEA:32287"/>
        <dbReference type="ChEBI" id="CHEBI:1178"/>
        <dbReference type="ChEBI" id="CHEBI:35121"/>
        <dbReference type="EC" id="4.2.1.33"/>
    </reaction>
</comment>
<comment type="cofactor">
    <cofactor evidence="1">
        <name>[4Fe-4S] cluster</name>
        <dbReference type="ChEBI" id="CHEBI:49883"/>
    </cofactor>
    <text evidence="1">Binds 1 [4Fe-4S] cluster per subunit.</text>
</comment>
<comment type="pathway">
    <text evidence="1">Amino-acid biosynthesis; L-leucine biosynthesis; L-leucine from 3-methyl-2-oxobutanoate: step 2/4.</text>
</comment>
<comment type="subunit">
    <text evidence="1">Heterodimer of LeuC and LeuD.</text>
</comment>
<comment type="similarity">
    <text evidence="1">Belongs to the aconitase/IPM isomerase family. LeuC type 1 subfamily.</text>
</comment>
<sequence length="469" mass="50692">MSAPRTLYDKIWDDHVVDQQEDGTCLLYIDRHLVHEVTSPQAFEGLHMAGRPVRHPEKTLAVVDHNVPTSPDRINGIQNEESRIQVEALARNAADFGVEYYSERDKRQGIVHIVGPEQGFTLPGMTIVCGDSHTSTHGAFGALAHGIGTSEVEHVLATQTLIQKKAKNMLVRVDGKLPAGVTAKDIVLAIIGEIGTAGGTGYVIEYAGEAIRSLSMEGRMTICNMSIEGGARAGLIAPDETTFEYIKGRPRAPQGETLEQAINYWKTLHSDEGAHFDKIVTLDAGSLPPIVSWGSSPEDVVSVTGVVPNPDDIADETKRASKWRALDYMGLKPGTKITDIAVDRVFIGSCTNGRIEDLRAAAKVVEGKKVAPTVNAMIVPGSGLVKEQAEAEGLHKIFIEAGFDWREPGCSMCLAMNDDRLKPGERCASTSNRNFEGRQGFKGRTHLVSPAMAAAAAIAGHFVDIRAWK</sequence>
<keyword id="KW-0004">4Fe-4S</keyword>
<keyword id="KW-0028">Amino-acid biosynthesis</keyword>
<keyword id="KW-0100">Branched-chain amino acid biosynthesis</keyword>
<keyword id="KW-0408">Iron</keyword>
<keyword id="KW-0411">Iron-sulfur</keyword>
<keyword id="KW-0432">Leucine biosynthesis</keyword>
<keyword id="KW-0456">Lyase</keyword>
<keyword id="KW-0479">Metal-binding</keyword>
<proteinExistence type="inferred from homology"/>
<reference key="1">
    <citation type="journal article" date="2002" name="Proc. Natl. Acad. Sci. U.S.A.">
        <title>The genome sequence of the facultative intracellular pathogen Brucella melitensis.</title>
        <authorList>
            <person name="DelVecchio V.G."/>
            <person name="Kapatral V."/>
            <person name="Redkar R.J."/>
            <person name="Patra G."/>
            <person name="Mujer C."/>
            <person name="Los T."/>
            <person name="Ivanova N."/>
            <person name="Anderson I."/>
            <person name="Bhattacharyya A."/>
            <person name="Lykidis A."/>
            <person name="Reznik G."/>
            <person name="Jablonski L."/>
            <person name="Larsen N."/>
            <person name="D'Souza M."/>
            <person name="Bernal A."/>
            <person name="Mazur M."/>
            <person name="Goltsman E."/>
            <person name="Selkov E."/>
            <person name="Elzer P.H."/>
            <person name="Hagius S."/>
            <person name="O'Callaghan D."/>
            <person name="Letesson J.-J."/>
            <person name="Haselkorn R."/>
            <person name="Kyrpides N.C."/>
            <person name="Overbeek R."/>
        </authorList>
    </citation>
    <scope>NUCLEOTIDE SEQUENCE [LARGE SCALE GENOMIC DNA]</scope>
    <source>
        <strain>ATCC 23456 / CCUG 17765 / NCTC 10094 / 16M</strain>
    </source>
</reference>
<feature type="chain" id="PRO_0000076713" description="3-isopropylmalate dehydratase large subunit">
    <location>
        <begin position="1"/>
        <end position="469"/>
    </location>
</feature>
<feature type="binding site" evidence="1">
    <location>
        <position position="350"/>
    </location>
    <ligand>
        <name>[4Fe-4S] cluster</name>
        <dbReference type="ChEBI" id="CHEBI:49883"/>
    </ligand>
</feature>
<feature type="binding site" evidence="1">
    <location>
        <position position="410"/>
    </location>
    <ligand>
        <name>[4Fe-4S] cluster</name>
        <dbReference type="ChEBI" id="CHEBI:49883"/>
    </ligand>
</feature>
<feature type="binding site" evidence="1">
    <location>
        <position position="413"/>
    </location>
    <ligand>
        <name>[4Fe-4S] cluster</name>
        <dbReference type="ChEBI" id="CHEBI:49883"/>
    </ligand>
</feature>
<organism>
    <name type="scientific">Brucella melitensis biotype 1 (strain ATCC 23456 / CCUG 17765 / NCTC 10094 / 16M)</name>
    <dbReference type="NCBI Taxonomy" id="224914"/>
    <lineage>
        <taxon>Bacteria</taxon>
        <taxon>Pseudomonadati</taxon>
        <taxon>Pseudomonadota</taxon>
        <taxon>Alphaproteobacteria</taxon>
        <taxon>Hyphomicrobiales</taxon>
        <taxon>Brucellaceae</taxon>
        <taxon>Brucella/Ochrobactrum group</taxon>
        <taxon>Brucella</taxon>
    </lineage>
</organism>
<evidence type="ECO:0000255" key="1">
    <source>
        <dbReference type="HAMAP-Rule" id="MF_01026"/>
    </source>
</evidence>
<accession>Q8YJC9</accession>
<name>LEUC_BRUME</name>
<protein>
    <recommendedName>
        <fullName evidence="1">3-isopropylmalate dehydratase large subunit</fullName>
        <ecNumber evidence="1">4.2.1.33</ecNumber>
    </recommendedName>
    <alternativeName>
        <fullName evidence="1">Alpha-IPM isomerase</fullName>
        <shortName evidence="1">IPMI</shortName>
    </alternativeName>
    <alternativeName>
        <fullName evidence="1">Isopropylmalate isomerase</fullName>
    </alternativeName>
</protein>